<dbReference type="EC" id="2.1.1.-" evidence="1"/>
<dbReference type="EMBL" id="AF031590">
    <property type="protein sequence ID" value="AAC03485.1"/>
    <property type="molecule type" value="Genomic_DNA"/>
</dbReference>
<dbReference type="EMBL" id="AF187159">
    <property type="protein sequence ID" value="AAF16006.1"/>
    <property type="status" value="ALT_INIT"/>
    <property type="molecule type" value="Genomic_DNA"/>
</dbReference>
<dbReference type="EMBL" id="AL939118">
    <property type="protein sequence ID" value="CAB42703.1"/>
    <property type="molecule type" value="Genomic_DNA"/>
</dbReference>
<dbReference type="PIR" id="T36572">
    <property type="entry name" value="T36572"/>
</dbReference>
<dbReference type="RefSeq" id="NP_628071.1">
    <property type="nucleotide sequence ID" value="NC_003888.3"/>
</dbReference>
<dbReference type="RefSeq" id="WP_011029291.1">
    <property type="nucleotide sequence ID" value="NZ_VNID01000003.1"/>
</dbReference>
<dbReference type="SMR" id="O54571"/>
<dbReference type="FunCoup" id="O54571">
    <property type="interactions" value="34"/>
</dbReference>
<dbReference type="STRING" id="100226.gene:17761512"/>
<dbReference type="PaxDb" id="100226-SCO3885"/>
<dbReference type="GeneID" id="91385157"/>
<dbReference type="KEGG" id="sco:SCO3885"/>
<dbReference type="PATRIC" id="fig|100226.15.peg.3958"/>
<dbReference type="eggNOG" id="COG0357">
    <property type="taxonomic scope" value="Bacteria"/>
</dbReference>
<dbReference type="HOGENOM" id="CLU_065341_5_0_11"/>
<dbReference type="InParanoid" id="O54571"/>
<dbReference type="OrthoDB" id="9808773at2"/>
<dbReference type="PhylomeDB" id="O54571"/>
<dbReference type="BRENDA" id="2.1.1.170">
    <property type="organism ID" value="5998"/>
</dbReference>
<dbReference type="Proteomes" id="UP000001973">
    <property type="component" value="Chromosome"/>
</dbReference>
<dbReference type="GO" id="GO:0005829">
    <property type="term" value="C:cytosol"/>
    <property type="evidence" value="ECO:0000318"/>
    <property type="project" value="GO_Central"/>
</dbReference>
<dbReference type="GO" id="GO:0070043">
    <property type="term" value="F:rRNA (guanine-N7-)-methyltransferase activity"/>
    <property type="evidence" value="ECO:0000318"/>
    <property type="project" value="GO_Central"/>
</dbReference>
<dbReference type="FunFam" id="3.40.50.150:FF:000117">
    <property type="entry name" value="Ribosomal RNA small subunit methyltransferase G"/>
    <property type="match status" value="1"/>
</dbReference>
<dbReference type="Gene3D" id="3.40.50.150">
    <property type="entry name" value="Vaccinia Virus protein VP39"/>
    <property type="match status" value="1"/>
</dbReference>
<dbReference type="HAMAP" id="MF_00074">
    <property type="entry name" value="16SrRNA_methyltr_G"/>
    <property type="match status" value="1"/>
</dbReference>
<dbReference type="InterPro" id="IPR003682">
    <property type="entry name" value="rRNA_ssu_MeTfrase_G"/>
</dbReference>
<dbReference type="InterPro" id="IPR029063">
    <property type="entry name" value="SAM-dependent_MTases_sf"/>
</dbReference>
<dbReference type="NCBIfam" id="TIGR00138">
    <property type="entry name" value="rsmG_gidB"/>
    <property type="match status" value="1"/>
</dbReference>
<dbReference type="PANTHER" id="PTHR31760">
    <property type="entry name" value="S-ADENOSYL-L-METHIONINE-DEPENDENT METHYLTRANSFERASES SUPERFAMILY PROTEIN"/>
    <property type="match status" value="1"/>
</dbReference>
<dbReference type="PANTHER" id="PTHR31760:SF0">
    <property type="entry name" value="S-ADENOSYL-L-METHIONINE-DEPENDENT METHYLTRANSFERASES SUPERFAMILY PROTEIN"/>
    <property type="match status" value="1"/>
</dbReference>
<dbReference type="Pfam" id="PF02527">
    <property type="entry name" value="GidB"/>
    <property type="match status" value="1"/>
</dbReference>
<dbReference type="SUPFAM" id="SSF53335">
    <property type="entry name" value="S-adenosyl-L-methionine-dependent methyltransferases"/>
    <property type="match status" value="1"/>
</dbReference>
<reference key="1">
    <citation type="submission" date="1998-01" db="EMBL/GenBank/DDBJ databases">
        <title>Gene organization in the trxB/A-oriC region of the Streptomyces coelicolor 3A(2) chromosome and comparison with other bacteria.</title>
        <authorList>
            <person name="Gal-Mor O."/>
            <person name="Borovok I."/>
            <person name="Av-Gay Y."/>
            <person name="Cohen G."/>
            <person name="Aharonowitz Y."/>
        </authorList>
    </citation>
    <scope>NUCLEOTIDE SEQUENCE [GENOMIC DNA]</scope>
    <source>
        <strain>ATCC BAA-471 / A3(2) / M145</strain>
    </source>
</reference>
<reference key="2">
    <citation type="journal article" date="2000" name="J. Bacteriol.">
        <title>Partitioning of the linear chromosome during sporulation of Streptomyces coelicolor A3(2) involves an oriC-linked parAB locus.</title>
        <authorList>
            <person name="Kim H.-J."/>
            <person name="Calcutt M.J."/>
            <person name="Schmidt F.J."/>
            <person name="Chater K.F."/>
        </authorList>
    </citation>
    <scope>NUCLEOTIDE SEQUENCE [GENOMIC DNA]</scope>
    <source>
        <strain>A3(2) / NRRL B-16638</strain>
    </source>
</reference>
<reference key="3">
    <citation type="journal article" date="2002" name="Nature">
        <title>Complete genome sequence of the model actinomycete Streptomyces coelicolor A3(2).</title>
        <authorList>
            <person name="Bentley S.D."/>
            <person name="Chater K.F."/>
            <person name="Cerdeno-Tarraga A.-M."/>
            <person name="Challis G.L."/>
            <person name="Thomson N.R."/>
            <person name="James K.D."/>
            <person name="Harris D.E."/>
            <person name="Quail M.A."/>
            <person name="Kieser H."/>
            <person name="Harper D."/>
            <person name="Bateman A."/>
            <person name="Brown S."/>
            <person name="Chandra G."/>
            <person name="Chen C.W."/>
            <person name="Collins M."/>
            <person name="Cronin A."/>
            <person name="Fraser A."/>
            <person name="Goble A."/>
            <person name="Hidalgo J."/>
            <person name="Hornsby T."/>
            <person name="Howarth S."/>
            <person name="Huang C.-H."/>
            <person name="Kieser T."/>
            <person name="Larke L."/>
            <person name="Murphy L.D."/>
            <person name="Oliver K."/>
            <person name="O'Neil S."/>
            <person name="Rabbinowitsch E."/>
            <person name="Rajandream M.A."/>
            <person name="Rutherford K.M."/>
            <person name="Rutter S."/>
            <person name="Seeger K."/>
            <person name="Saunders D."/>
            <person name="Sharp S."/>
            <person name="Squares R."/>
            <person name="Squares S."/>
            <person name="Taylor K."/>
            <person name="Warren T."/>
            <person name="Wietzorrek A."/>
            <person name="Woodward J.R."/>
            <person name="Barrell B.G."/>
            <person name="Parkhill J."/>
            <person name="Hopwood D.A."/>
        </authorList>
    </citation>
    <scope>NUCLEOTIDE SEQUENCE [LARGE SCALE GENOMIC DNA]</scope>
    <source>
        <strain>ATCC BAA-471 / A3(2) / M145</strain>
    </source>
</reference>
<reference key="4">
    <citation type="journal article" date="2007" name="J. Bacteriol.">
        <title>Mutations in rsmG, encoding a 16S rRNA methyltransferase, result in low-level streptomycin resistance and antibiotic overproduction in Streptomyces coelicolor A3(2).</title>
        <authorList>
            <person name="Nishimura K."/>
            <person name="Hosaka T."/>
            <person name="Tokuyama S."/>
            <person name="Okamoto S."/>
            <person name="Ochi K."/>
        </authorList>
    </citation>
    <scope>FUNCTION AS A M7G METHYLTRANSFERASE</scope>
    <scope>DISRUPTION PHENOTYPE</scope>
    <source>
        <strain>A3(2) / 1147</strain>
    </source>
</reference>
<proteinExistence type="evidence at protein level"/>
<evidence type="ECO:0000255" key="1">
    <source>
        <dbReference type="HAMAP-Rule" id="MF_00074"/>
    </source>
</evidence>
<evidence type="ECO:0000269" key="2">
    <source>
    </source>
</evidence>
<evidence type="ECO:0000305" key="3"/>
<gene>
    <name evidence="1" type="primary">rsmG</name>
    <name type="synonym">gidB</name>
    <name type="ordered locus">SCO3885</name>
    <name type="ORF">STH24.07</name>
</gene>
<comment type="function">
    <text evidence="1 2">Specifically methylates the N7 position of guanine in position 518 of 16S rRNA.</text>
</comment>
<comment type="subcellular location">
    <subcellularLocation>
        <location evidence="1">Cytoplasm</location>
    </subcellularLocation>
</comment>
<comment type="disruption phenotype">
    <text evidence="2">Confers low-level streptomycin resistance and a greater ability to produce the antibiotic actinorhodin.</text>
</comment>
<comment type="similarity">
    <text evidence="1">Belongs to the methyltransferase superfamily. RNA methyltransferase RsmG family.</text>
</comment>
<comment type="sequence caution" evidence="3">
    <conflict type="erroneous initiation">
        <sequence resource="EMBL-CDS" id="AAF16006"/>
    </conflict>
</comment>
<accession>O54571</accession>
<accession>Q9RFM0</accession>
<name>RSMG_STRCO</name>
<protein>
    <recommendedName>
        <fullName evidence="1">Ribosomal RNA small subunit methyltransferase G</fullName>
        <ecNumber evidence="1">2.1.1.-</ecNumber>
    </recommendedName>
    <alternativeName>
        <fullName evidence="1">16S rRNA 7-methylguanosine methyltransferase</fullName>
        <shortName evidence="1">16S rRNA m7G methyltransferase</shortName>
    </alternativeName>
    <alternativeName>
        <fullName>Glucose-inhibited division protein B</fullName>
    </alternativeName>
</protein>
<sequence length="239" mass="25647">MSEAAELPPVPEQARDVFGDRYADAVRYAELLAEAGVKRGLIGPREVPRLWERHLLNCAVLSEVVPEGVTVCDVGSGAGLPGIPLALVREDLKITLLEPLLRRTNFLTEVVELLGLDHVTVVRGRAEEVMGKLPPVHVVTARAVAPLDRLATWGIPLLRPYGEMLALKGDTAEEELKAATAALSKLGAEQTSILHVGEGVVSPLSTVVRVEVGESPGGVRFAAKRAKAARTGRTRRRRG</sequence>
<organism>
    <name type="scientific">Streptomyces coelicolor (strain ATCC BAA-471 / A3(2) / M145)</name>
    <dbReference type="NCBI Taxonomy" id="100226"/>
    <lineage>
        <taxon>Bacteria</taxon>
        <taxon>Bacillati</taxon>
        <taxon>Actinomycetota</taxon>
        <taxon>Actinomycetes</taxon>
        <taxon>Kitasatosporales</taxon>
        <taxon>Streptomycetaceae</taxon>
        <taxon>Streptomyces</taxon>
        <taxon>Streptomyces albidoflavus group</taxon>
    </lineage>
</organism>
<feature type="chain" id="PRO_0000184349" description="Ribosomal RNA small subunit methyltransferase G">
    <location>
        <begin position="1"/>
        <end position="239"/>
    </location>
</feature>
<feature type="binding site" evidence="1">
    <location>
        <position position="75"/>
    </location>
    <ligand>
        <name>S-adenosyl-L-methionine</name>
        <dbReference type="ChEBI" id="CHEBI:59789"/>
    </ligand>
</feature>
<feature type="binding site" evidence="1">
    <location>
        <position position="80"/>
    </location>
    <ligand>
        <name>S-adenosyl-L-methionine</name>
        <dbReference type="ChEBI" id="CHEBI:59789"/>
    </ligand>
</feature>
<feature type="binding site" evidence="1">
    <location>
        <begin position="126"/>
        <end position="127"/>
    </location>
    <ligand>
        <name>S-adenosyl-L-methionine</name>
        <dbReference type="ChEBI" id="CHEBI:59789"/>
    </ligand>
</feature>
<feature type="binding site" evidence="1">
    <location>
        <position position="142"/>
    </location>
    <ligand>
        <name>S-adenosyl-L-methionine</name>
        <dbReference type="ChEBI" id="CHEBI:59789"/>
    </ligand>
</feature>
<keyword id="KW-0963">Cytoplasm</keyword>
<keyword id="KW-0489">Methyltransferase</keyword>
<keyword id="KW-1185">Reference proteome</keyword>
<keyword id="KW-0698">rRNA processing</keyword>
<keyword id="KW-0949">S-adenosyl-L-methionine</keyword>
<keyword id="KW-0808">Transferase</keyword>